<gene>
    <name type="primary">PSMB4</name>
</gene>
<feature type="propeptide" id="PRO_0000239854" evidence="1">
    <location>
        <begin position="1"/>
        <end position="45"/>
    </location>
</feature>
<feature type="chain" id="PRO_0000239855" description="Proteasome subunit beta type-4">
    <location>
        <begin position="46"/>
        <end position="264"/>
    </location>
</feature>
<feature type="modified residue" description="N-acetylmethionine" evidence="2">
    <location>
        <position position="1"/>
    </location>
</feature>
<feature type="modified residue" description="Phosphotyrosine" evidence="2">
    <location>
        <position position="102"/>
    </location>
</feature>
<feature type="strand" evidence="6">
    <location>
        <begin position="51"/>
        <end position="53"/>
    </location>
</feature>
<feature type="strand" evidence="6">
    <location>
        <begin position="56"/>
        <end position="61"/>
    </location>
</feature>
<feature type="strand" evidence="6">
    <location>
        <begin position="64"/>
        <end position="70"/>
    </location>
</feature>
<feature type="strand" evidence="6">
    <location>
        <begin position="73"/>
        <end position="75"/>
    </location>
</feature>
<feature type="strand" evidence="6">
    <location>
        <begin position="78"/>
        <end position="83"/>
    </location>
</feature>
<feature type="strand" evidence="6">
    <location>
        <begin position="87"/>
        <end position="91"/>
    </location>
</feature>
<feature type="strand" evidence="6">
    <location>
        <begin position="94"/>
        <end position="101"/>
    </location>
</feature>
<feature type="helix" evidence="6">
    <location>
        <begin position="102"/>
        <end position="122"/>
    </location>
</feature>
<feature type="helix" evidence="6">
    <location>
        <begin position="130"/>
        <end position="146"/>
    </location>
</feature>
<feature type="strand" evidence="6">
    <location>
        <begin position="153"/>
        <end position="161"/>
    </location>
</feature>
<feature type="strand" evidence="6">
    <location>
        <begin position="164"/>
        <end position="170"/>
    </location>
</feature>
<feature type="strand" evidence="6">
    <location>
        <begin position="176"/>
        <end position="178"/>
    </location>
</feature>
<feature type="strand" evidence="6">
    <location>
        <begin position="180"/>
        <end position="183"/>
    </location>
</feature>
<feature type="helix" evidence="6">
    <location>
        <begin position="187"/>
        <end position="190"/>
    </location>
</feature>
<feature type="helix" evidence="6">
    <location>
        <begin position="192"/>
        <end position="201"/>
    </location>
</feature>
<feature type="helix" evidence="6">
    <location>
        <begin position="207"/>
        <end position="224"/>
    </location>
</feature>
<feature type="strand" evidence="5">
    <location>
        <begin position="225"/>
        <end position="227"/>
    </location>
</feature>
<feature type="strand" evidence="6">
    <location>
        <begin position="232"/>
        <end position="238"/>
    </location>
</feature>
<feature type="strand" evidence="6">
    <location>
        <begin position="241"/>
        <end position="248"/>
    </location>
</feature>
<feature type="helix" evidence="6">
    <location>
        <begin position="255"/>
        <end position="258"/>
    </location>
</feature>
<dbReference type="EMBL" id="BC102182">
    <property type="protein sequence ID" value="AAI02183.1"/>
    <property type="molecule type" value="mRNA"/>
</dbReference>
<dbReference type="RefSeq" id="NP_001029438.1">
    <property type="nucleotide sequence ID" value="NM_001034266.2"/>
</dbReference>
<dbReference type="PDB" id="1IRU">
    <property type="method" value="X-ray"/>
    <property type="resolution" value="2.75 A"/>
    <property type="chains" value="2/N=46-264"/>
</dbReference>
<dbReference type="PDB" id="7DR6">
    <property type="method" value="EM"/>
    <property type="resolution" value="4.10 A"/>
    <property type="chains" value="K/V=1-264"/>
</dbReference>
<dbReference type="PDB" id="7DR7">
    <property type="method" value="EM"/>
    <property type="resolution" value="3.30 A"/>
    <property type="chains" value="K/V=1-264"/>
</dbReference>
<dbReference type="PDB" id="7DRW">
    <property type="method" value="EM"/>
    <property type="resolution" value="4.20 A"/>
    <property type="chains" value="V/n=1-264"/>
</dbReference>
<dbReference type="PDB" id="8AZK">
    <property type="method" value="EM"/>
    <property type="resolution" value="3.10 A"/>
    <property type="chains" value="2/N=46-264"/>
</dbReference>
<dbReference type="PDB" id="8FZ5">
    <property type="method" value="EM"/>
    <property type="resolution" value="2.23 A"/>
    <property type="chains" value="N/b=1-264"/>
</dbReference>
<dbReference type="PDB" id="8FZ6">
    <property type="method" value="EM"/>
    <property type="resolution" value="2.54 A"/>
    <property type="chains" value="N/b=1-264"/>
</dbReference>
<dbReference type="PDBsum" id="1IRU"/>
<dbReference type="PDBsum" id="7DR6"/>
<dbReference type="PDBsum" id="7DR7"/>
<dbReference type="PDBsum" id="7DRW"/>
<dbReference type="PDBsum" id="8AZK"/>
<dbReference type="PDBsum" id="8FZ5"/>
<dbReference type="PDBsum" id="8FZ6"/>
<dbReference type="EMDB" id="EMD-15767"/>
<dbReference type="EMDB" id="EMD-29603"/>
<dbReference type="EMDB" id="EMD-29604"/>
<dbReference type="EMDB" id="EMD-30824"/>
<dbReference type="EMDB" id="EMD-30825"/>
<dbReference type="EMDB" id="EMD-30828"/>
<dbReference type="SMR" id="Q3T108"/>
<dbReference type="FunCoup" id="Q3T108">
    <property type="interactions" value="3942"/>
</dbReference>
<dbReference type="STRING" id="9913.ENSBTAP00000028364"/>
<dbReference type="MEROPS" id="T01.987"/>
<dbReference type="PaxDb" id="9913-ENSBTAP00000028364"/>
<dbReference type="PeptideAtlas" id="Q3T108"/>
<dbReference type="Ensembl" id="ENSBTAT00000028364.4">
    <property type="protein sequence ID" value="ENSBTAP00000028364.2"/>
    <property type="gene ID" value="ENSBTAG00000021288.4"/>
</dbReference>
<dbReference type="GeneID" id="506203"/>
<dbReference type="KEGG" id="bta:506203"/>
<dbReference type="CTD" id="5692"/>
<dbReference type="VEuPathDB" id="HostDB:ENSBTAG00000021288"/>
<dbReference type="VGNC" id="VGNC:33448">
    <property type="gene designation" value="PSMB4"/>
</dbReference>
<dbReference type="eggNOG" id="KOG0185">
    <property type="taxonomic scope" value="Eukaryota"/>
</dbReference>
<dbReference type="GeneTree" id="ENSGT00390000000698"/>
<dbReference type="HOGENOM" id="CLU_072435_2_0_1"/>
<dbReference type="InParanoid" id="Q3T108"/>
<dbReference type="OMA" id="QPIMRRY"/>
<dbReference type="OrthoDB" id="7854943at2759"/>
<dbReference type="TreeFam" id="TF106220"/>
<dbReference type="Reactome" id="R-BTA-1169091">
    <property type="pathway name" value="Activation of NF-kappaB in B cells"/>
</dbReference>
<dbReference type="Reactome" id="R-BTA-1234176">
    <property type="pathway name" value="Oxygen-dependent proline hydroxylation of Hypoxia-inducible Factor Alpha"/>
</dbReference>
<dbReference type="Reactome" id="R-BTA-1236978">
    <property type="pathway name" value="Cross-presentation of soluble exogenous antigens (endosomes)"/>
</dbReference>
<dbReference type="Reactome" id="R-BTA-174084">
    <property type="pathway name" value="Autodegradation of Cdh1 by Cdh1:APC/C"/>
</dbReference>
<dbReference type="Reactome" id="R-BTA-174154">
    <property type="pathway name" value="APC/C:Cdc20 mediated degradation of Securin"/>
</dbReference>
<dbReference type="Reactome" id="R-BTA-174178">
    <property type="pathway name" value="APC/C:Cdh1 mediated degradation of Cdc20 and other APC/C:Cdh1 targeted proteins in late mitosis/early G1"/>
</dbReference>
<dbReference type="Reactome" id="R-BTA-174184">
    <property type="pathway name" value="Cdc20:Phospho-APC/C mediated degradation of Cyclin A"/>
</dbReference>
<dbReference type="Reactome" id="R-BTA-187577">
    <property type="pathway name" value="SCF(Skp2)-mediated degradation of p27/p21"/>
</dbReference>
<dbReference type="Reactome" id="R-BTA-195253">
    <property type="pathway name" value="Degradation of beta-catenin by the destruction complex"/>
</dbReference>
<dbReference type="Reactome" id="R-BTA-202424">
    <property type="pathway name" value="Downstream TCR signaling"/>
</dbReference>
<dbReference type="Reactome" id="R-BTA-2467813">
    <property type="pathway name" value="Separation of Sister Chromatids"/>
</dbReference>
<dbReference type="Reactome" id="R-BTA-2871837">
    <property type="pathway name" value="FCERI mediated NF-kB activation"/>
</dbReference>
<dbReference type="Reactome" id="R-BTA-349425">
    <property type="pathway name" value="Autodegradation of the E3 ubiquitin ligase COP1"/>
</dbReference>
<dbReference type="Reactome" id="R-BTA-350562">
    <property type="pathway name" value="Regulation of ornithine decarboxylase (ODC)"/>
</dbReference>
<dbReference type="Reactome" id="R-BTA-382556">
    <property type="pathway name" value="ABC-family proteins mediated transport"/>
</dbReference>
<dbReference type="Reactome" id="R-BTA-450408">
    <property type="pathway name" value="AUF1 (hnRNP D0) binds and destabilizes mRNA"/>
</dbReference>
<dbReference type="Reactome" id="R-BTA-4608870">
    <property type="pathway name" value="Asymmetric localization of PCP proteins"/>
</dbReference>
<dbReference type="Reactome" id="R-BTA-4641257">
    <property type="pathway name" value="Degradation of AXIN"/>
</dbReference>
<dbReference type="Reactome" id="R-BTA-4641258">
    <property type="pathway name" value="Degradation of DVL"/>
</dbReference>
<dbReference type="Reactome" id="R-BTA-5358346">
    <property type="pathway name" value="Hedgehog ligand biogenesis"/>
</dbReference>
<dbReference type="Reactome" id="R-BTA-5607761">
    <property type="pathway name" value="Dectin-1 mediated noncanonical NF-kB signaling"/>
</dbReference>
<dbReference type="Reactome" id="R-BTA-5607764">
    <property type="pathway name" value="CLEC7A (Dectin-1) signaling"/>
</dbReference>
<dbReference type="Reactome" id="R-BTA-5610780">
    <property type="pathway name" value="Degradation of GLI1 by the proteasome"/>
</dbReference>
<dbReference type="Reactome" id="R-BTA-5610785">
    <property type="pathway name" value="GLI3 is processed to GLI3R by the proteasome"/>
</dbReference>
<dbReference type="Reactome" id="R-BTA-5632684">
    <property type="pathway name" value="Hedgehog 'on' state"/>
</dbReference>
<dbReference type="Reactome" id="R-BTA-5668541">
    <property type="pathway name" value="TNFR2 non-canonical NF-kB pathway"/>
</dbReference>
<dbReference type="Reactome" id="R-BTA-5676590">
    <property type="pathway name" value="NIK--&gt;noncanonical NF-kB signaling"/>
</dbReference>
<dbReference type="Reactome" id="R-BTA-5687128">
    <property type="pathway name" value="MAPK6/MAPK4 signaling"/>
</dbReference>
<dbReference type="Reactome" id="R-BTA-5689603">
    <property type="pathway name" value="UCH proteinases"/>
</dbReference>
<dbReference type="Reactome" id="R-BTA-5689880">
    <property type="pathway name" value="Ub-specific processing proteases"/>
</dbReference>
<dbReference type="Reactome" id="R-BTA-68867">
    <property type="pathway name" value="Assembly of the pre-replicative complex"/>
</dbReference>
<dbReference type="Reactome" id="R-BTA-68949">
    <property type="pathway name" value="Orc1 removal from chromatin"/>
</dbReference>
<dbReference type="Reactome" id="R-BTA-69017">
    <property type="pathway name" value="CDK-mediated phosphorylation and removal of Cdc6"/>
</dbReference>
<dbReference type="Reactome" id="R-BTA-69481">
    <property type="pathway name" value="G2/M Checkpoints"/>
</dbReference>
<dbReference type="Reactome" id="R-BTA-69601">
    <property type="pathway name" value="Ubiquitin Mediated Degradation of Phosphorylated Cdc25A"/>
</dbReference>
<dbReference type="Reactome" id="R-BTA-75815">
    <property type="pathway name" value="Ubiquitin-dependent degradation of Cyclin D"/>
</dbReference>
<dbReference type="Reactome" id="R-BTA-8852276">
    <property type="pathway name" value="The role of GTSE1 in G2/M progression after G2 checkpoint"/>
</dbReference>
<dbReference type="Reactome" id="R-BTA-8854050">
    <property type="pathway name" value="FBXL7 down-regulates AURKA during mitotic entry and in early mitosis"/>
</dbReference>
<dbReference type="Reactome" id="R-BTA-8939236">
    <property type="pathway name" value="RUNX1 regulates transcription of genes involved in differentiation of HSCs"/>
</dbReference>
<dbReference type="Reactome" id="R-BTA-8939902">
    <property type="pathway name" value="Regulation of RUNX2 expression and activity"/>
</dbReference>
<dbReference type="Reactome" id="R-BTA-8941858">
    <property type="pathway name" value="Regulation of RUNX3 expression and activity"/>
</dbReference>
<dbReference type="Reactome" id="R-BTA-8948751">
    <property type="pathway name" value="Regulation of PTEN stability and activity"/>
</dbReference>
<dbReference type="Reactome" id="R-BTA-8951664">
    <property type="pathway name" value="Neddylation"/>
</dbReference>
<dbReference type="Reactome" id="R-BTA-9020702">
    <property type="pathway name" value="Interleukin-1 signaling"/>
</dbReference>
<dbReference type="Reactome" id="R-BTA-9755511">
    <property type="pathway name" value="KEAP1-NFE2L2 pathway"/>
</dbReference>
<dbReference type="Reactome" id="R-BTA-9762114">
    <property type="pathway name" value="GSK3B and BTRC:CUL1-mediated-degradation of NFE2L2"/>
</dbReference>
<dbReference type="Reactome" id="R-BTA-983168">
    <property type="pathway name" value="Antigen processing: Ubiquitination &amp; Proteasome degradation"/>
</dbReference>
<dbReference type="Reactome" id="R-BTA-9907900">
    <property type="pathway name" value="Proteasome assembly"/>
</dbReference>
<dbReference type="EvolutionaryTrace" id="Q3T108"/>
<dbReference type="Proteomes" id="UP000009136">
    <property type="component" value="Chromosome 3"/>
</dbReference>
<dbReference type="Bgee" id="ENSBTAG00000021288">
    <property type="expression patterns" value="Expressed in tongue muscle and 104 other cell types or tissues"/>
</dbReference>
<dbReference type="GO" id="GO:0036064">
    <property type="term" value="C:ciliary basal body"/>
    <property type="evidence" value="ECO:0007669"/>
    <property type="project" value="Ensembl"/>
</dbReference>
<dbReference type="GO" id="GO:0005829">
    <property type="term" value="C:cytosol"/>
    <property type="evidence" value="ECO:0000318"/>
    <property type="project" value="GO_Central"/>
</dbReference>
<dbReference type="GO" id="GO:0005739">
    <property type="term" value="C:mitochondrion"/>
    <property type="evidence" value="ECO:0007669"/>
    <property type="project" value="Ensembl"/>
</dbReference>
<dbReference type="GO" id="GO:0005654">
    <property type="term" value="C:nucleoplasm"/>
    <property type="evidence" value="ECO:0007669"/>
    <property type="project" value="Ensembl"/>
</dbReference>
<dbReference type="GO" id="GO:0005634">
    <property type="term" value="C:nucleus"/>
    <property type="evidence" value="ECO:0000318"/>
    <property type="project" value="GO_Central"/>
</dbReference>
<dbReference type="GO" id="GO:0005839">
    <property type="term" value="C:proteasome core complex"/>
    <property type="evidence" value="ECO:0000250"/>
    <property type="project" value="UniProtKB"/>
</dbReference>
<dbReference type="GO" id="GO:0019774">
    <property type="term" value="C:proteasome core complex, beta-subunit complex"/>
    <property type="evidence" value="ECO:0000250"/>
    <property type="project" value="UniProtKB"/>
</dbReference>
<dbReference type="GO" id="GO:0043161">
    <property type="term" value="P:proteasome-mediated ubiquitin-dependent protein catabolic process"/>
    <property type="evidence" value="ECO:0000318"/>
    <property type="project" value="GO_Central"/>
</dbReference>
<dbReference type="CDD" id="cd03760">
    <property type="entry name" value="proteasome_beta_type_4"/>
    <property type="match status" value="1"/>
</dbReference>
<dbReference type="FunFam" id="3.60.20.10:FF:000014">
    <property type="entry name" value="Proteasome subunit beta type-7"/>
    <property type="match status" value="1"/>
</dbReference>
<dbReference type="Gene3D" id="3.60.20.10">
    <property type="entry name" value="Glutamine Phosphoribosylpyrophosphate, subunit 1, domain 1"/>
    <property type="match status" value="1"/>
</dbReference>
<dbReference type="InterPro" id="IPR029055">
    <property type="entry name" value="Ntn_hydrolases_N"/>
</dbReference>
<dbReference type="InterPro" id="IPR016295">
    <property type="entry name" value="Proteasome_beta4"/>
</dbReference>
<dbReference type="InterPro" id="IPR016050">
    <property type="entry name" value="Proteasome_bsu_CS"/>
</dbReference>
<dbReference type="InterPro" id="IPR001353">
    <property type="entry name" value="Proteasome_sua/b"/>
</dbReference>
<dbReference type="InterPro" id="IPR023333">
    <property type="entry name" value="Proteasome_suB-type"/>
</dbReference>
<dbReference type="PANTHER" id="PTHR32194">
    <property type="entry name" value="METALLOPROTEASE TLDD"/>
    <property type="match status" value="1"/>
</dbReference>
<dbReference type="PANTHER" id="PTHR32194:SF6">
    <property type="entry name" value="PROTEASOME SUBUNIT BETA"/>
    <property type="match status" value="1"/>
</dbReference>
<dbReference type="Pfam" id="PF00227">
    <property type="entry name" value="Proteasome"/>
    <property type="match status" value="1"/>
</dbReference>
<dbReference type="PIRSF" id="PIRSF001213">
    <property type="entry name" value="Psome_endopept_beta"/>
    <property type="match status" value="1"/>
</dbReference>
<dbReference type="SUPFAM" id="SSF56235">
    <property type="entry name" value="N-terminal nucleophile aminohydrolases (Ntn hydrolases)"/>
    <property type="match status" value="1"/>
</dbReference>
<dbReference type="PROSITE" id="PS00854">
    <property type="entry name" value="PROTEASOME_BETA_1"/>
    <property type="match status" value="1"/>
</dbReference>
<dbReference type="PROSITE" id="PS51476">
    <property type="entry name" value="PROTEASOME_BETA_2"/>
    <property type="match status" value="1"/>
</dbReference>
<accession>Q3T108</accession>
<sequence length="264" mass="29031">MEALLESRSGLWAGGPAPGQFYRIPPTPGSSVDPVSALYGSPITRTQNPMVTGTSVLGLKFEGGVVIAADMLGSYGSLARFRNISRIMRVNNSTMLGASGDYADFQYLKQVLGQMVIDEELLGDGHSYSPKAIHSWLTRAMYSRRSKMNPLWNTMVIGGYADGESFLGYVDMLGVAYEAPSLATGYGAYLAQPLLREVLEKQPVLSQTEARELVERCMRVLYYRDARSYNRFQIATVTEKGVEIEGPLSAETNWDIAHMISGFE</sequence>
<evidence type="ECO:0000250" key="1"/>
<evidence type="ECO:0000250" key="2">
    <source>
        <dbReference type="UniProtKB" id="P28070"/>
    </source>
</evidence>
<evidence type="ECO:0000255" key="3">
    <source>
        <dbReference type="PROSITE-ProRule" id="PRU00809"/>
    </source>
</evidence>
<evidence type="ECO:0000269" key="4">
    <source>
    </source>
</evidence>
<evidence type="ECO:0007829" key="5">
    <source>
        <dbReference type="PDB" id="7DR7"/>
    </source>
</evidence>
<evidence type="ECO:0007829" key="6">
    <source>
        <dbReference type="PDB" id="8FZ5"/>
    </source>
</evidence>
<organism>
    <name type="scientific">Bos taurus</name>
    <name type="common">Bovine</name>
    <dbReference type="NCBI Taxonomy" id="9913"/>
    <lineage>
        <taxon>Eukaryota</taxon>
        <taxon>Metazoa</taxon>
        <taxon>Chordata</taxon>
        <taxon>Craniata</taxon>
        <taxon>Vertebrata</taxon>
        <taxon>Euteleostomi</taxon>
        <taxon>Mammalia</taxon>
        <taxon>Eutheria</taxon>
        <taxon>Laurasiatheria</taxon>
        <taxon>Artiodactyla</taxon>
        <taxon>Ruminantia</taxon>
        <taxon>Pecora</taxon>
        <taxon>Bovidae</taxon>
        <taxon>Bovinae</taxon>
        <taxon>Bos</taxon>
    </lineage>
</organism>
<protein>
    <recommendedName>
        <fullName>Proteasome subunit beta type-4</fullName>
    </recommendedName>
</protein>
<comment type="function">
    <text evidence="2">Non-catalytic component of the 20S core proteasome complex involved in the proteolytic degradation of most intracellular proteins. This complex plays numerous essential roles within the cell by associating with different regulatory particles. Associated with two 19S regulatory particles, forms the 26S proteasome and thus participates in the ATP-dependent degradation of ubiquitinated proteins. The 26S proteasome plays a key role in the maintenance of protein homeostasis by removing misfolded or damaged proteins that could impair cellular functions, and by removing proteins whose functions are no longer required. Associated with the PA200 or PA28, the 20S proteasome mediates ubiquitin-independent protein degradation. This type of proteolysis is required in several pathways including spermatogenesis (20S-PA200 complex) or generation of a subset of MHC class I-presented antigenic peptides (20S-PA28 complex). SMAD1/OAZ1/PSMB4 complex mediates the degradation of the CREBBP/EP300 repressor SNIP1.</text>
</comment>
<comment type="subunit">
    <text evidence="2 4">The 26S proteasome consists of a 20S proteasome core and two 19S regulatory subunits. The 20S proteasome core is a barrel-shaped complex made of 28 subunits that are arranged in four stacked rings. The two outer rings are each formed by seven alpha subunits, and the two inner rings are formed by seven beta subunits. The proteolytic activity is exerted by three beta-subunits PSMB5, PSMB6 and PSMB7 (PubMed:12015144). Forms a ternary complex with SMAD1 and OAZ1 before PSMB4 is incorporated into the 20S proteasome (By similarity). Interacts with PRPF19 (By similarity).</text>
</comment>
<comment type="subcellular location">
    <subcellularLocation>
        <location evidence="2">Cytoplasm</location>
    </subcellularLocation>
    <subcellularLocation>
        <location evidence="2">Nucleus</location>
    </subcellularLocation>
</comment>
<comment type="similarity">
    <text evidence="3">Belongs to the peptidase T1B family.</text>
</comment>
<name>PSB4_BOVIN</name>
<keyword id="KW-0002">3D-structure</keyword>
<keyword id="KW-0007">Acetylation</keyword>
<keyword id="KW-0963">Cytoplasm</keyword>
<keyword id="KW-0539">Nucleus</keyword>
<keyword id="KW-0597">Phosphoprotein</keyword>
<keyword id="KW-0647">Proteasome</keyword>
<keyword id="KW-1185">Reference proteome</keyword>
<reference key="1">
    <citation type="submission" date="2005-08" db="EMBL/GenBank/DDBJ databases">
        <authorList>
            <consortium name="NIH - Mammalian Gene Collection (MGC) project"/>
        </authorList>
    </citation>
    <scope>NUCLEOTIDE SEQUENCE [LARGE SCALE MRNA]</scope>
    <source>
        <strain>Crossbred X Angus</strain>
        <tissue>Ileum</tissue>
    </source>
</reference>
<reference key="2">
    <citation type="journal article" date="2002" name="Structure">
        <title>The structure of the mammalian 20S proteasome at 2.75 A resolution.</title>
        <authorList>
            <person name="Unno M."/>
            <person name="Mizushima T."/>
            <person name="Morimoto Y."/>
            <person name="Tomisugi Y."/>
            <person name="Tanaka K."/>
            <person name="Yasuoka N."/>
            <person name="Tsukihara T."/>
        </authorList>
    </citation>
    <scope>X-RAY CRYSTALLOGRAPHY (2.75 ANGSTROMS) OF 46-264 OF COMPLEX WITH 20S PROTEASOME</scope>
</reference>
<proteinExistence type="evidence at protein level"/>